<evidence type="ECO:0000255" key="1">
    <source>
        <dbReference type="HAMAP-Rule" id="MF_01151"/>
    </source>
</evidence>
<evidence type="ECO:0000256" key="2">
    <source>
        <dbReference type="SAM" id="MobiDB-lite"/>
    </source>
</evidence>
<keyword id="KW-0143">Chaperone</keyword>
<keyword id="KW-0963">Cytoplasm</keyword>
<keyword id="KW-1185">Reference proteome</keyword>
<keyword id="KW-0346">Stress response</keyword>
<protein>
    <recommendedName>
        <fullName evidence="1">Protein GrpE</fullName>
    </recommendedName>
    <alternativeName>
        <fullName evidence="1">HSP-70 cofactor</fullName>
    </alternativeName>
</protein>
<gene>
    <name evidence="1" type="primary">grpE</name>
    <name type="ordered locus">RHOS4_28320</name>
    <name type="ORF">RSP_1219</name>
</gene>
<comment type="function">
    <text evidence="1">Participates actively in the response to hyperosmotic and heat shock by preventing the aggregation of stress-denatured proteins, in association with DnaK and GrpE. It is the nucleotide exchange factor for DnaK and may function as a thermosensor. Unfolded proteins bind initially to DnaJ; upon interaction with the DnaJ-bound protein, DnaK hydrolyzes its bound ATP, resulting in the formation of a stable complex. GrpE releases ADP from DnaK; ATP binding to DnaK triggers the release of the substrate protein, thus completing the reaction cycle. Several rounds of ATP-dependent interactions between DnaJ, DnaK and GrpE are required for fully efficient folding.</text>
</comment>
<comment type="subunit">
    <text evidence="1">Homodimer.</text>
</comment>
<comment type="subcellular location">
    <subcellularLocation>
        <location evidence="1">Cytoplasm</location>
    </subcellularLocation>
</comment>
<comment type="similarity">
    <text evidence="1">Belongs to the GrpE family.</text>
</comment>
<proteinExistence type="inferred from homology"/>
<name>GRPE_CERS4</name>
<sequence>MAEDQAPREETVEAPELTEAPEIDELETLRAERDELRDRFMRALADAENSRKRADRDRREAEQYGGTRLARDLLPVYDNLSRALEVATDEQRAAAAALIEGVELTLRELRNVMNKHGVRPITPQVGDTFDPQQHQAMFEAPVPGTKAGQIIQVMTEGFMIHDRLLRPAQVGVSSNTGA</sequence>
<feature type="chain" id="PRO_1000085124" description="Protein GrpE">
    <location>
        <begin position="1"/>
        <end position="178"/>
    </location>
</feature>
<feature type="region of interest" description="Disordered" evidence="2">
    <location>
        <begin position="1"/>
        <end position="30"/>
    </location>
</feature>
<feature type="compositionally biased region" description="Basic and acidic residues" evidence="2">
    <location>
        <begin position="1"/>
        <end position="11"/>
    </location>
</feature>
<accession>Q3IYI4</accession>
<dbReference type="EMBL" id="CP000143">
    <property type="protein sequence ID" value="ABA80400.2"/>
    <property type="molecule type" value="Genomic_DNA"/>
</dbReference>
<dbReference type="RefSeq" id="YP_354301.2">
    <property type="nucleotide sequence ID" value="NC_007493.2"/>
</dbReference>
<dbReference type="SMR" id="Q3IYI4"/>
<dbReference type="STRING" id="272943.RSP_1219"/>
<dbReference type="EnsemblBacteria" id="ABA80400">
    <property type="protein sequence ID" value="ABA80400"/>
    <property type="gene ID" value="RSP_1219"/>
</dbReference>
<dbReference type="KEGG" id="rsp:RSP_1219"/>
<dbReference type="PATRIC" id="fig|272943.9.peg.3200"/>
<dbReference type="eggNOG" id="COG0576">
    <property type="taxonomic scope" value="Bacteria"/>
</dbReference>
<dbReference type="OrthoDB" id="9789811at2"/>
<dbReference type="Proteomes" id="UP000002703">
    <property type="component" value="Chromosome 1"/>
</dbReference>
<dbReference type="GO" id="GO:0005737">
    <property type="term" value="C:cytoplasm"/>
    <property type="evidence" value="ECO:0007669"/>
    <property type="project" value="UniProtKB-SubCell"/>
</dbReference>
<dbReference type="GO" id="GO:0000774">
    <property type="term" value="F:adenyl-nucleotide exchange factor activity"/>
    <property type="evidence" value="ECO:0007669"/>
    <property type="project" value="InterPro"/>
</dbReference>
<dbReference type="GO" id="GO:0042803">
    <property type="term" value="F:protein homodimerization activity"/>
    <property type="evidence" value="ECO:0007669"/>
    <property type="project" value="InterPro"/>
</dbReference>
<dbReference type="GO" id="GO:0051087">
    <property type="term" value="F:protein-folding chaperone binding"/>
    <property type="evidence" value="ECO:0007669"/>
    <property type="project" value="InterPro"/>
</dbReference>
<dbReference type="GO" id="GO:0051082">
    <property type="term" value="F:unfolded protein binding"/>
    <property type="evidence" value="ECO:0007669"/>
    <property type="project" value="TreeGrafter"/>
</dbReference>
<dbReference type="GO" id="GO:0006457">
    <property type="term" value="P:protein folding"/>
    <property type="evidence" value="ECO:0007669"/>
    <property type="project" value="InterPro"/>
</dbReference>
<dbReference type="CDD" id="cd00446">
    <property type="entry name" value="GrpE"/>
    <property type="match status" value="1"/>
</dbReference>
<dbReference type="Gene3D" id="3.90.20.20">
    <property type="match status" value="1"/>
</dbReference>
<dbReference type="Gene3D" id="2.30.22.10">
    <property type="entry name" value="Head domain of nucleotide exchange factor GrpE"/>
    <property type="match status" value="1"/>
</dbReference>
<dbReference type="HAMAP" id="MF_01151">
    <property type="entry name" value="GrpE"/>
    <property type="match status" value="1"/>
</dbReference>
<dbReference type="InterPro" id="IPR000740">
    <property type="entry name" value="GrpE"/>
</dbReference>
<dbReference type="InterPro" id="IPR013805">
    <property type="entry name" value="GrpE_coiled_coil"/>
</dbReference>
<dbReference type="InterPro" id="IPR009012">
    <property type="entry name" value="GrpE_head"/>
</dbReference>
<dbReference type="PANTHER" id="PTHR21237">
    <property type="entry name" value="GRPE PROTEIN"/>
    <property type="match status" value="1"/>
</dbReference>
<dbReference type="PANTHER" id="PTHR21237:SF23">
    <property type="entry name" value="GRPE PROTEIN HOMOLOG, MITOCHONDRIAL"/>
    <property type="match status" value="1"/>
</dbReference>
<dbReference type="Pfam" id="PF01025">
    <property type="entry name" value="GrpE"/>
    <property type="match status" value="1"/>
</dbReference>
<dbReference type="PRINTS" id="PR00773">
    <property type="entry name" value="GRPEPROTEIN"/>
</dbReference>
<dbReference type="SUPFAM" id="SSF58014">
    <property type="entry name" value="Coiled-coil domain of nucleotide exchange factor GrpE"/>
    <property type="match status" value="1"/>
</dbReference>
<dbReference type="SUPFAM" id="SSF51064">
    <property type="entry name" value="Head domain of nucleotide exchange factor GrpE"/>
    <property type="match status" value="1"/>
</dbReference>
<dbReference type="PROSITE" id="PS01071">
    <property type="entry name" value="GRPE"/>
    <property type="match status" value="1"/>
</dbReference>
<reference key="1">
    <citation type="submission" date="2005-09" db="EMBL/GenBank/DDBJ databases">
        <title>Complete sequence of chromosome 1 of Rhodobacter sphaeroides 2.4.1.</title>
        <authorList>
            <person name="Copeland A."/>
            <person name="Lucas S."/>
            <person name="Lapidus A."/>
            <person name="Barry K."/>
            <person name="Detter J.C."/>
            <person name="Glavina T."/>
            <person name="Hammon N."/>
            <person name="Israni S."/>
            <person name="Pitluck S."/>
            <person name="Richardson P."/>
            <person name="Mackenzie C."/>
            <person name="Choudhary M."/>
            <person name="Larimer F."/>
            <person name="Hauser L.J."/>
            <person name="Land M."/>
            <person name="Donohue T.J."/>
            <person name="Kaplan S."/>
        </authorList>
    </citation>
    <scope>NUCLEOTIDE SEQUENCE [LARGE SCALE GENOMIC DNA]</scope>
    <source>
        <strain>ATCC 17023 / DSM 158 / JCM 6121 / CCUG 31486 / LMG 2827 / NBRC 12203 / NCIMB 8253 / ATH 2.4.1.</strain>
    </source>
</reference>
<organism>
    <name type="scientific">Cereibacter sphaeroides (strain ATCC 17023 / DSM 158 / JCM 6121 / CCUG 31486 / LMG 2827 / NBRC 12203 / NCIMB 8253 / ATH 2.4.1.)</name>
    <name type="common">Rhodobacter sphaeroides</name>
    <dbReference type="NCBI Taxonomy" id="272943"/>
    <lineage>
        <taxon>Bacteria</taxon>
        <taxon>Pseudomonadati</taxon>
        <taxon>Pseudomonadota</taxon>
        <taxon>Alphaproteobacteria</taxon>
        <taxon>Rhodobacterales</taxon>
        <taxon>Paracoccaceae</taxon>
        <taxon>Cereibacter</taxon>
    </lineage>
</organism>